<protein>
    <recommendedName>
        <fullName evidence="1">Outer capsid protein VP4</fullName>
    </recommendedName>
    <alternativeName>
        <fullName evidence="1">Hemagglutinin</fullName>
    </alternativeName>
    <component>
        <recommendedName>
            <fullName evidence="1">Outer capsid protein VP8*</fullName>
        </recommendedName>
    </component>
    <component>
        <recommendedName>
            <fullName evidence="1">Outer capsid protein VP5*</fullName>
        </recommendedName>
    </component>
</protein>
<dbReference type="EMBL" id="D13396">
    <property type="status" value="NOT_ANNOTATED_CDS"/>
    <property type="molecule type" value="Genomic_RNA"/>
</dbReference>
<dbReference type="SMR" id="P36306"/>
<dbReference type="GO" id="GO:0044172">
    <property type="term" value="C:host cell endoplasmic reticulum-Golgi intermediate compartment"/>
    <property type="evidence" value="ECO:0007669"/>
    <property type="project" value="UniProtKB-SubCell"/>
</dbReference>
<dbReference type="GO" id="GO:0020002">
    <property type="term" value="C:host cell plasma membrane"/>
    <property type="evidence" value="ECO:0007669"/>
    <property type="project" value="UniProtKB-SubCell"/>
</dbReference>
<dbReference type="GO" id="GO:0044168">
    <property type="term" value="C:host cell rough endoplasmic reticulum"/>
    <property type="evidence" value="ECO:0007669"/>
    <property type="project" value="UniProtKB-SubCell"/>
</dbReference>
<dbReference type="GO" id="GO:0044163">
    <property type="term" value="C:host cytoskeleton"/>
    <property type="evidence" value="ECO:0007669"/>
    <property type="project" value="UniProtKB-SubCell"/>
</dbReference>
<dbReference type="GO" id="GO:0016020">
    <property type="term" value="C:membrane"/>
    <property type="evidence" value="ECO:0007669"/>
    <property type="project" value="UniProtKB-KW"/>
</dbReference>
<dbReference type="GO" id="GO:0039624">
    <property type="term" value="C:viral outer capsid"/>
    <property type="evidence" value="ECO:0007669"/>
    <property type="project" value="UniProtKB-UniRule"/>
</dbReference>
<dbReference type="GO" id="GO:0039665">
    <property type="term" value="P:permeabilization of host organelle membrane involved in viral entry into host cell"/>
    <property type="evidence" value="ECO:0007669"/>
    <property type="project" value="UniProtKB-UniRule"/>
</dbReference>
<dbReference type="GO" id="GO:0019062">
    <property type="term" value="P:virion attachment to host cell"/>
    <property type="evidence" value="ECO:0007669"/>
    <property type="project" value="UniProtKB-UniRule"/>
</dbReference>
<dbReference type="Gene3D" id="1.20.5.170">
    <property type="match status" value="1"/>
</dbReference>
<dbReference type="Gene3D" id="2.60.120.200">
    <property type="match status" value="1"/>
</dbReference>
<dbReference type="HAMAP" id="MF_04132">
    <property type="entry name" value="Rota_A_VP4"/>
    <property type="match status" value="1"/>
</dbReference>
<dbReference type="HAMAP" id="MF_04125">
    <property type="entry name" value="Rota_VP4"/>
    <property type="match status" value="1"/>
</dbReference>
<dbReference type="InterPro" id="IPR013320">
    <property type="entry name" value="ConA-like_dom_sf"/>
</dbReference>
<dbReference type="InterPro" id="IPR042546">
    <property type="entry name" value="Rota_A_VP4"/>
</dbReference>
<dbReference type="InterPro" id="IPR035330">
    <property type="entry name" value="Rota_VP4_MID"/>
</dbReference>
<dbReference type="InterPro" id="IPR038017">
    <property type="entry name" value="Rota_VP4_MID_sf"/>
</dbReference>
<dbReference type="InterPro" id="IPR000416">
    <property type="entry name" value="VP4_concanavalin-like"/>
</dbReference>
<dbReference type="InterPro" id="IPR035329">
    <property type="entry name" value="VP4_helical"/>
</dbReference>
<dbReference type="Pfam" id="PF17477">
    <property type="entry name" value="Rota_VP4_MID"/>
    <property type="match status" value="1"/>
</dbReference>
<dbReference type="Pfam" id="PF00426">
    <property type="entry name" value="VP4_haemagglut"/>
    <property type="match status" value="1"/>
</dbReference>
<dbReference type="Pfam" id="PF17478">
    <property type="entry name" value="VP4_helical"/>
    <property type="match status" value="1"/>
</dbReference>
<dbReference type="SUPFAM" id="SSF49899">
    <property type="entry name" value="Concanavalin A-like lectins/glucanases"/>
    <property type="match status" value="1"/>
</dbReference>
<dbReference type="SUPFAM" id="SSF111379">
    <property type="entry name" value="VP4 membrane interaction domain"/>
    <property type="match status" value="1"/>
</dbReference>
<accession>P36306</accession>
<organism>
    <name type="scientific">Rotavirus A (isolate RVA/Cow/Thailand/61A/1988/G10P7[5])</name>
    <name type="common">RV-A</name>
    <dbReference type="NCBI Taxonomy" id="10929"/>
    <lineage>
        <taxon>Viruses</taxon>
        <taxon>Riboviria</taxon>
        <taxon>Orthornavirae</taxon>
        <taxon>Duplornaviricota</taxon>
        <taxon>Resentoviricetes</taxon>
        <taxon>Reovirales</taxon>
        <taxon>Sedoreoviridae</taxon>
        <taxon>Rotavirus</taxon>
        <taxon>Rotavirus A</taxon>
    </lineage>
</organism>
<proteinExistence type="inferred from homology"/>
<keyword id="KW-0167">Capsid protein</keyword>
<keyword id="KW-0175">Coiled coil</keyword>
<keyword id="KW-1015">Disulfide bond</keyword>
<keyword id="KW-0348">Hemagglutinin</keyword>
<keyword id="KW-1032">Host cell membrane</keyword>
<keyword id="KW-1035">Host cytoplasm</keyword>
<keyword id="KW-1037">Host cytoskeleton</keyword>
<keyword id="KW-1038">Host endoplasmic reticulum</keyword>
<keyword id="KW-1043">Host membrane</keyword>
<keyword id="KW-0945">Host-virus interaction</keyword>
<keyword id="KW-0472">Membrane</keyword>
<keyword id="KW-1152">Outer capsid protein</keyword>
<keyword id="KW-1161">Viral attachment to host cell</keyword>
<keyword id="KW-1162">Viral penetration into host cytoplasm</keyword>
<keyword id="KW-1173">Viral penetration via permeabilization of host membrane</keyword>
<keyword id="KW-0946">Virion</keyword>
<keyword id="KW-1160">Virus entry into host cell</keyword>
<sequence length="776" mass="86336">MASLIYRQLLANSYAVDLSDEIQSVGSEKNQRVTVNPGPFAQTGYAPVNWGPGEVNDPTVVQPVLDGPYQPASFDLPVGNWMLLAPTGPGVVVEGTDNSGRWLSVILIEPGVTSETRTYTMFGSSKQVVVSNVSDTKWKFVEMMKTAVDGDYRNGGTLLSDTKLYGMMKYGERLFIYEGETPNVTTKGYIVTNYASVEVRPYSDFYIISRSQESACTEYINNGLPPIQNTRNVVPVAISSRSIKQREEQANEDIIVSKTSLWKEMQYNRDIIIRFKFDNSIIKSGGLGYKWAEISFKAANYQYNYIRDGEEVTAHTTCSVNGVNDFSFNGGSLPTDFAISRYEVIKENSYVYIDYWDDSQAFRNMVYVRSLAANLNDVMCSAGDYSFKLPAGQWPVMKGGAVTLHTAGVTLSTQFTDFVSLNSLRFRFRLAVEEPSFTITRTRVSKLYGLPAANPNGGREYYEVAGRFSLISLVPSNDDYQTPIMNSVTVRQDLERRLNELREEFNNLSQEIAVSQLIDLAMLPLDMFSMFSGIEGTVNAAKSMATNVMRKFKSSKLASSVSMLTNSLSDAASSVSRSSSIRSIGSTASAWANISEQTQDAVSEVATISSQVSQISGKLRLKEITTQTEGMNFDDISAAVLKAKIDRSIQVDQNAFPDVIAEASEKFIRNRAYRVIDGDEAFEAGTDGRFFAYKVETLEEMPFNIGKFADLVTNSPVISAIIDFKTLKNLNDNYGITREQAFNLLRSNPKVLRGFIDQNDPIIKNRIEQLIMQCRL</sequence>
<name>VP4_ROTB6</name>
<feature type="chain" id="PRO_0000041012" description="Outer capsid protein VP4" evidence="1">
    <location>
        <begin position="1"/>
        <end position="776"/>
    </location>
</feature>
<feature type="chain" id="PRO_0000041013" description="Outer capsid protein VP8*" evidence="1">
    <location>
        <begin position="1"/>
        <end position="231"/>
    </location>
</feature>
<feature type="chain" id="PRO_0000041014" description="Outer capsid protein VP5*" evidence="1">
    <location>
        <begin position="247"/>
        <end position="776"/>
    </location>
</feature>
<feature type="region of interest" description="Spike head" evidence="1">
    <location>
        <begin position="65"/>
        <end position="224"/>
    </location>
</feature>
<feature type="region of interest" description="Spike body and stalk (antigen domain)" evidence="1">
    <location>
        <begin position="248"/>
        <end position="479"/>
    </location>
</feature>
<feature type="region of interest" description="Hydrophobic; possible role in virus entry into host cell" evidence="1">
    <location>
        <begin position="389"/>
        <end position="409"/>
    </location>
</feature>
<feature type="region of interest" description="Spike foot" evidence="1">
    <location>
        <begin position="510"/>
        <end position="776"/>
    </location>
</feature>
<feature type="coiled-coil region" evidence="1">
    <location>
        <begin position="484"/>
        <end position="518"/>
    </location>
</feature>
<feature type="short sequence motif" description="DGE motif; interaction with ITGA2/ITGB1 heterodimer" evidence="1">
    <location>
        <begin position="308"/>
        <end position="310"/>
    </location>
</feature>
<feature type="short sequence motif" description="YGL motif; interaction with ITGA4" evidence="1">
    <location>
        <begin position="448"/>
        <end position="450"/>
    </location>
</feature>
<feature type="short sequence motif" description="KID motif; interaction with HSPA8" evidence="1">
    <location>
        <begin position="644"/>
        <end position="646"/>
    </location>
</feature>
<feature type="site" description="Cleavage" evidence="1">
    <location>
        <begin position="231"/>
        <end position="232"/>
    </location>
</feature>
<feature type="site" description="Cleavage" evidence="1">
    <location>
        <begin position="241"/>
        <end position="242"/>
    </location>
</feature>
<feature type="site" description="Probable cleavage" evidence="1">
    <location>
        <begin position="246"/>
        <end position="247"/>
    </location>
</feature>
<feature type="disulfide bond" evidence="1">
    <location>
        <begin position="318"/>
        <end position="380"/>
    </location>
</feature>
<reference key="1">
    <citation type="journal article" date="1993" name="J. Gen. Virol.">
        <title>Independent segregation of the VP4 and the VP7 genes in bovine rotaviruses as confirmed by VP4 sequence analysis of G8 and G10 bovine rotavirus strains.</title>
        <authorList>
            <person name="Taniguchi K."/>
            <person name="Urasawa T."/>
            <person name="Urasawa S."/>
        </authorList>
    </citation>
    <scope>NUCLEOTIDE SEQUENCE [GENOMIC RNA]</scope>
</reference>
<organismHost>
    <name type="scientific">Bos taurus</name>
    <name type="common">Bovine</name>
    <dbReference type="NCBI Taxonomy" id="9913"/>
</organismHost>
<comment type="function">
    <molecule>Outer capsid protein VP4</molecule>
    <text evidence="1">Spike-forming protein that mediates virion attachment to the host epithelial cell receptors and plays a major role in cell penetration, determination of host range restriction and virulence. Rotavirus attachment and entry into the host cell probably involves multiple sequential contacts between the outer capsid proteins VP4 and VP7, and the cell receptors. It is subsequently lost, together with VP7, following virus entry into the host cell. Following entry into the host cell, low intracellular or intravesicular Ca(2+) concentration probably causes the calcium-stabilized VP7 trimers to dissociate from the virion. This step is probably necessary for the membrane-disrupting entry step and the release of VP4, which is locked onto the virion by VP7. During the virus exit from the host cell, VP4 seems to be required to target the newly formed virions to the host cell lipid rafts.</text>
</comment>
<comment type="function">
    <molecule>Outer capsid protein VP5*</molecule>
    <text evidence="1">Forms the spike 'foot' and 'body' and acts as a membrane permeabilization protein that mediates release of viral particles from endosomal compartments into the cytoplasm. During entry, the part of VP5* that protrudes from the virus folds back on itself and reorganizes from a local dimer to a trimer. This reorganization may be linked to membrane penetration by exposing VP5* hydrophobic region. In integrin-dependent strains, VP5* targets the integrin heterodimer ITGA2/ITGB1 for cell attachment.</text>
</comment>
<comment type="function">
    <molecule>Outer capsid protein VP8*</molecule>
    <text evidence="1">Forms the head of the spikes and mediates the recognition of specific host cell surface glycans. It is the viral hemagglutinin and an important target of neutralizing antibodies. In sialic acid-dependent strains, VP8* binds to host cell sialic acid, most probably a ganglioside, providing the initial contact. In some other strains, VP8* mediates the attachment to histo-blood group antigens (HBGAs) for viral entry.</text>
</comment>
<comment type="subunit">
    <molecule>Outer capsid protein VP4</molecule>
    <text evidence="1">Homotrimer. VP4 adopts a dimeric appearance above the capsid surface, while forming a trimeric base anchored inside the capsid layer. Only hints of the third molecule are observed above the capsid surface. It probably performs a series of molecular rearrangements during viral entry. Prior to trypsin cleavage, it is flexible. The priming trypsin cleavage triggers its rearrangement into rigid spikes with approximate two-fold symmetry of their protruding parts. After an unknown second triggering event, cleaved VP4 may undergo another rearrangement, in which two VP5* subunits fold back on themselves and join a third subunit to form a tightly associated trimer, shaped like a folded umbrella. Interacts with VP6. Interacts with VP7.</text>
</comment>
<comment type="subunit">
    <molecule>Outer capsid protein VP5*</molecule>
    <text evidence="1">Homotrimer. The trimer is coiled-coil stabilized by its C-terminus, however, its N-terminus, known as antigen domain or 'body', seems to be flexible allowing it to self-associate either as a dimer or a trimer.</text>
</comment>
<comment type="subcellular location">
    <molecule>Outer capsid protein VP4</molecule>
    <subcellularLocation>
        <location evidence="1">Virion</location>
    </subcellularLocation>
    <subcellularLocation>
        <location evidence="1">Host rough endoplasmic reticulum</location>
    </subcellularLocation>
    <subcellularLocation>
        <location evidence="1">Host cell membrane</location>
    </subcellularLocation>
    <subcellularLocation>
        <location evidence="1">Host cytoplasm</location>
        <location evidence="1">Host cytoskeleton</location>
    </subcellularLocation>
    <subcellularLocation>
        <location evidence="1">Host endoplasmic reticulum-Golgi intermediate compartment</location>
    </subcellularLocation>
    <text evidence="1">The outer layer contains 180 copies of VP4, grouped as 60 dimers. Immature double-layered particles assembled in the cytoplasm bud across the membrane of the endoplasmic reticulum, acquiring during this process a transient lipid membrane that is modified with the ER resident viral glycoproteins NSP4 and VP7; these enveloped particles also contain VP4. As the particles move towards the interior of the ER cisternae, the transient lipid membrane and the non-structural protein NSP4 are lost, while the virus surface proteins VP4 and VP7 rearrange to form the outermost virus protein layer, yielding mature infectious triple-layered particles. VP4 also seems to associate with lipid rafts of the host cell membrane probably for the exit of the virus from the infected cell by an alternate pathway.</text>
</comment>
<comment type="subcellular location">
    <molecule>Outer capsid protein VP8*</molecule>
    <subcellularLocation>
        <location evidence="1">Virion</location>
    </subcellularLocation>
    <text evidence="1">Outer capsid protein.</text>
</comment>
<comment type="subcellular location">
    <molecule>Outer capsid protein VP5*</molecule>
    <subcellularLocation>
        <location evidence="1">Virion</location>
    </subcellularLocation>
    <text evidence="1">Outer capsid protein.</text>
</comment>
<comment type="domain">
    <molecule>Outer capsid protein VP4</molecule>
    <text evidence="1">The VP4 spike is divided into a foot, a stalk and body, and a head.</text>
</comment>
<comment type="PTM">
    <molecule>Outer capsid protein VP4</molecule>
    <text evidence="1">Proteolytic cleavage by trypsin results in activation of VP4 functions and greatly increases infectivity. The penetration into the host cell is dependent on trypsin treatment of VP4. It produces two peptides, VP5* and VP8* that remain associated with the virion. Cleavage of VP4 by trypsin probably occurs in vivo in the lumen of the intestine prior to infection of enterocytes. Trypsin seems to be incorporated into the three-layered viral particles but remains inactive as long as the viral outer capsid is intact and would only be activated upon the solubilization of the latter.</text>
</comment>
<comment type="miscellaneous">
    <text evidence="1">In group A rotaviruses, VP4 defines the P serotype.</text>
</comment>
<comment type="miscellaneous">
    <text evidence="1">Some rotavirus strains are neuraminidase-sensitive and require sialic acid to attach to the cell surface. Some rotavirus strains are integrin-dependent. Some rotavirus strains depend on ganglioside for their entry into the host cell. Hsp70 also seems to be involved in the entry of some strains.</text>
</comment>
<comment type="similarity">
    <text evidence="1">Belongs to the rotavirus VP4 family.</text>
</comment>
<evidence type="ECO:0000255" key="1">
    <source>
        <dbReference type="HAMAP-Rule" id="MF_04132"/>
    </source>
</evidence>